<evidence type="ECO:0000255" key="1">
    <source>
        <dbReference type="HAMAP-Rule" id="MF_01351"/>
    </source>
</evidence>
<name>NUOI_LEPIN</name>
<gene>
    <name evidence="1" type="primary">nuoI</name>
    <name type="ordered locus">LA_0161</name>
</gene>
<protein>
    <recommendedName>
        <fullName evidence="1">NADH-quinone oxidoreductase subunit I</fullName>
        <ecNumber evidence="1">7.1.1.-</ecNumber>
    </recommendedName>
    <alternativeName>
        <fullName evidence="1">NADH dehydrogenase I subunit I</fullName>
    </alternativeName>
    <alternativeName>
        <fullName evidence="1">NDH-1 subunit I</fullName>
    </alternativeName>
</protein>
<organism>
    <name type="scientific">Leptospira interrogans serogroup Icterohaemorrhagiae serovar Lai (strain 56601)</name>
    <dbReference type="NCBI Taxonomy" id="189518"/>
    <lineage>
        <taxon>Bacteria</taxon>
        <taxon>Pseudomonadati</taxon>
        <taxon>Spirochaetota</taxon>
        <taxon>Spirochaetia</taxon>
        <taxon>Leptospirales</taxon>
        <taxon>Leptospiraceae</taxon>
        <taxon>Leptospira</taxon>
    </lineage>
</organism>
<feature type="chain" id="PRO_0000245715" description="NADH-quinone oxidoreductase subunit I">
    <location>
        <begin position="1"/>
        <end position="175"/>
    </location>
</feature>
<feature type="domain" description="4Fe-4S ferredoxin-type 1" evidence="1">
    <location>
        <begin position="69"/>
        <end position="98"/>
    </location>
</feature>
<feature type="domain" description="4Fe-4S ferredoxin-type 2" evidence="1">
    <location>
        <begin position="115"/>
        <end position="144"/>
    </location>
</feature>
<feature type="binding site" evidence="1">
    <location>
        <position position="78"/>
    </location>
    <ligand>
        <name>[4Fe-4S] cluster</name>
        <dbReference type="ChEBI" id="CHEBI:49883"/>
        <label>1</label>
    </ligand>
</feature>
<feature type="binding site" evidence="1">
    <location>
        <position position="81"/>
    </location>
    <ligand>
        <name>[4Fe-4S] cluster</name>
        <dbReference type="ChEBI" id="CHEBI:49883"/>
        <label>1</label>
    </ligand>
</feature>
<feature type="binding site" evidence="1">
    <location>
        <position position="84"/>
    </location>
    <ligand>
        <name>[4Fe-4S] cluster</name>
        <dbReference type="ChEBI" id="CHEBI:49883"/>
        <label>1</label>
    </ligand>
</feature>
<feature type="binding site" evidence="1">
    <location>
        <position position="88"/>
    </location>
    <ligand>
        <name>[4Fe-4S] cluster</name>
        <dbReference type="ChEBI" id="CHEBI:49883"/>
        <label>2</label>
    </ligand>
</feature>
<feature type="binding site" evidence="1">
    <location>
        <position position="124"/>
    </location>
    <ligand>
        <name>[4Fe-4S] cluster</name>
        <dbReference type="ChEBI" id="CHEBI:49883"/>
        <label>2</label>
    </ligand>
</feature>
<feature type="binding site" evidence="1">
    <location>
        <position position="127"/>
    </location>
    <ligand>
        <name>[4Fe-4S] cluster</name>
        <dbReference type="ChEBI" id="CHEBI:49883"/>
        <label>2</label>
    </ligand>
</feature>
<feature type="binding site" evidence="1">
    <location>
        <position position="130"/>
    </location>
    <ligand>
        <name>[4Fe-4S] cluster</name>
        <dbReference type="ChEBI" id="CHEBI:49883"/>
        <label>2</label>
    </ligand>
</feature>
<feature type="binding site" evidence="1">
    <location>
        <position position="134"/>
    </location>
    <ligand>
        <name>[4Fe-4S] cluster</name>
        <dbReference type="ChEBI" id="CHEBI:49883"/>
        <label>1</label>
    </ligand>
</feature>
<reference key="1">
    <citation type="journal article" date="2003" name="Nature">
        <title>Unique physiological and pathogenic features of Leptospira interrogans revealed by whole-genome sequencing.</title>
        <authorList>
            <person name="Ren S.-X."/>
            <person name="Fu G."/>
            <person name="Jiang X.-G."/>
            <person name="Zeng R."/>
            <person name="Miao Y.-G."/>
            <person name="Xu H."/>
            <person name="Zhang Y.-X."/>
            <person name="Xiong H."/>
            <person name="Lu G."/>
            <person name="Lu L.-F."/>
            <person name="Jiang H.-Q."/>
            <person name="Jia J."/>
            <person name="Tu Y.-F."/>
            <person name="Jiang J.-X."/>
            <person name="Gu W.-Y."/>
            <person name="Zhang Y.-Q."/>
            <person name="Cai Z."/>
            <person name="Sheng H.-H."/>
            <person name="Yin H.-F."/>
            <person name="Zhang Y."/>
            <person name="Zhu G.-F."/>
            <person name="Wan M."/>
            <person name="Huang H.-L."/>
            <person name="Qian Z."/>
            <person name="Wang S.-Y."/>
            <person name="Ma W."/>
            <person name="Yao Z.-J."/>
            <person name="Shen Y."/>
            <person name="Qiang B.-Q."/>
            <person name="Xia Q.-C."/>
            <person name="Guo X.-K."/>
            <person name="Danchin A."/>
            <person name="Saint Girons I."/>
            <person name="Somerville R.L."/>
            <person name="Wen Y.-M."/>
            <person name="Shi M.-H."/>
            <person name="Chen Z."/>
            <person name="Xu J.-G."/>
            <person name="Zhao G.-P."/>
        </authorList>
    </citation>
    <scope>NUCLEOTIDE SEQUENCE [LARGE SCALE GENOMIC DNA]</scope>
    <source>
        <strain>56601</strain>
    </source>
</reference>
<keyword id="KW-0004">4Fe-4S</keyword>
<keyword id="KW-0997">Cell inner membrane</keyword>
<keyword id="KW-1003">Cell membrane</keyword>
<keyword id="KW-0408">Iron</keyword>
<keyword id="KW-0411">Iron-sulfur</keyword>
<keyword id="KW-0472">Membrane</keyword>
<keyword id="KW-0479">Metal-binding</keyword>
<keyword id="KW-0520">NAD</keyword>
<keyword id="KW-0874">Quinone</keyword>
<keyword id="KW-1185">Reference proteome</keyword>
<keyword id="KW-0677">Repeat</keyword>
<keyword id="KW-1278">Translocase</keyword>
<keyword id="KW-0830">Ubiquinone</keyword>
<dbReference type="EC" id="7.1.1.-" evidence="1"/>
<dbReference type="EMBL" id="AE010300">
    <property type="protein sequence ID" value="AAN47360.1"/>
    <property type="molecule type" value="Genomic_DNA"/>
</dbReference>
<dbReference type="RefSeq" id="NP_710342.1">
    <property type="nucleotide sequence ID" value="NC_004342.2"/>
</dbReference>
<dbReference type="RefSeq" id="WP_000537600.1">
    <property type="nucleotide sequence ID" value="NC_004342.2"/>
</dbReference>
<dbReference type="SMR" id="Q8F9N0"/>
<dbReference type="STRING" id="189518.LA_0161"/>
<dbReference type="PaxDb" id="189518-LA_0161"/>
<dbReference type="EnsemblBacteria" id="AAN47360">
    <property type="protein sequence ID" value="AAN47360"/>
    <property type="gene ID" value="LA_0161"/>
</dbReference>
<dbReference type="KEGG" id="lil:LA_0161"/>
<dbReference type="PATRIC" id="fig|189518.3.peg.162"/>
<dbReference type="HOGENOM" id="CLU_067218_4_3_12"/>
<dbReference type="InParanoid" id="Q8F9N0"/>
<dbReference type="OrthoDB" id="9798098at2"/>
<dbReference type="PRO" id="PR:Q8F9N0"/>
<dbReference type="Proteomes" id="UP000001408">
    <property type="component" value="Chromosome I"/>
</dbReference>
<dbReference type="GO" id="GO:0005886">
    <property type="term" value="C:plasma membrane"/>
    <property type="evidence" value="ECO:0007669"/>
    <property type="project" value="UniProtKB-SubCell"/>
</dbReference>
<dbReference type="GO" id="GO:0051539">
    <property type="term" value="F:4 iron, 4 sulfur cluster binding"/>
    <property type="evidence" value="ECO:0007669"/>
    <property type="project" value="UniProtKB-KW"/>
</dbReference>
<dbReference type="GO" id="GO:0005506">
    <property type="term" value="F:iron ion binding"/>
    <property type="evidence" value="ECO:0007669"/>
    <property type="project" value="UniProtKB-UniRule"/>
</dbReference>
<dbReference type="GO" id="GO:0050136">
    <property type="term" value="F:NADH:ubiquinone reductase (non-electrogenic) activity"/>
    <property type="evidence" value="ECO:0007669"/>
    <property type="project" value="UniProtKB-UniRule"/>
</dbReference>
<dbReference type="GO" id="GO:0048038">
    <property type="term" value="F:quinone binding"/>
    <property type="evidence" value="ECO:0007669"/>
    <property type="project" value="UniProtKB-KW"/>
</dbReference>
<dbReference type="GO" id="GO:0009060">
    <property type="term" value="P:aerobic respiration"/>
    <property type="evidence" value="ECO:0000318"/>
    <property type="project" value="GO_Central"/>
</dbReference>
<dbReference type="FunFam" id="3.30.70.3270:FF:000009">
    <property type="entry name" value="NADH-quinone oxidoreductase subunit I"/>
    <property type="match status" value="1"/>
</dbReference>
<dbReference type="Gene3D" id="3.30.70.3270">
    <property type="match status" value="1"/>
</dbReference>
<dbReference type="HAMAP" id="MF_01351">
    <property type="entry name" value="NDH1_NuoI"/>
    <property type="match status" value="1"/>
</dbReference>
<dbReference type="InterPro" id="IPR017896">
    <property type="entry name" value="4Fe4S_Fe-S-bd"/>
</dbReference>
<dbReference type="InterPro" id="IPR017900">
    <property type="entry name" value="4Fe4S_Fe_S_CS"/>
</dbReference>
<dbReference type="InterPro" id="IPR010226">
    <property type="entry name" value="NADH_quinone_OxRdtase_chainI"/>
</dbReference>
<dbReference type="NCBIfam" id="TIGR01971">
    <property type="entry name" value="NuoI"/>
    <property type="match status" value="1"/>
</dbReference>
<dbReference type="PANTHER" id="PTHR10849:SF20">
    <property type="entry name" value="NADH DEHYDROGENASE [UBIQUINONE] IRON-SULFUR PROTEIN 8, MITOCHONDRIAL"/>
    <property type="match status" value="1"/>
</dbReference>
<dbReference type="PANTHER" id="PTHR10849">
    <property type="entry name" value="NADH DEHYDROGENASE UBIQUINONE IRON-SULFUR PROTEIN 8, MITOCHONDRIAL"/>
    <property type="match status" value="1"/>
</dbReference>
<dbReference type="Pfam" id="PF00037">
    <property type="entry name" value="Fer4"/>
    <property type="match status" value="1"/>
</dbReference>
<dbReference type="SUPFAM" id="SSF54862">
    <property type="entry name" value="4Fe-4S ferredoxins"/>
    <property type="match status" value="1"/>
</dbReference>
<dbReference type="PROSITE" id="PS00198">
    <property type="entry name" value="4FE4S_FER_1"/>
    <property type="match status" value="2"/>
</dbReference>
<dbReference type="PROSITE" id="PS51379">
    <property type="entry name" value="4FE4S_FER_2"/>
    <property type="match status" value="2"/>
</dbReference>
<accession>Q8F9N0</accession>
<comment type="function">
    <text evidence="1">NDH-1 shuttles electrons from NADH, via FMN and iron-sulfur (Fe-S) centers, to quinones in the respiratory chain. The immediate electron acceptor for the enzyme in this species is believed to be ubiquinone. Couples the redox reaction to proton translocation (for every two electrons transferred, four hydrogen ions are translocated across the cytoplasmic membrane), and thus conserves the redox energy in a proton gradient.</text>
</comment>
<comment type="catalytic activity">
    <reaction evidence="1">
        <text>a quinone + NADH + 5 H(+)(in) = a quinol + NAD(+) + 4 H(+)(out)</text>
        <dbReference type="Rhea" id="RHEA:57888"/>
        <dbReference type="ChEBI" id="CHEBI:15378"/>
        <dbReference type="ChEBI" id="CHEBI:24646"/>
        <dbReference type="ChEBI" id="CHEBI:57540"/>
        <dbReference type="ChEBI" id="CHEBI:57945"/>
        <dbReference type="ChEBI" id="CHEBI:132124"/>
    </reaction>
</comment>
<comment type="cofactor">
    <cofactor evidence="1">
        <name>[4Fe-4S] cluster</name>
        <dbReference type="ChEBI" id="CHEBI:49883"/>
    </cofactor>
    <text evidence="1">Binds 2 [4Fe-4S] clusters per subunit.</text>
</comment>
<comment type="subunit">
    <text evidence="1">NDH-1 is composed of 14 different subunits. Subunits NuoA, H, J, K, L, M, N constitute the membrane sector of the complex.</text>
</comment>
<comment type="subcellular location">
    <subcellularLocation>
        <location evidence="1">Cell inner membrane</location>
        <topology evidence="1">Peripheral membrane protein</topology>
    </subcellularLocation>
</comment>
<comment type="similarity">
    <text evidence="1">Belongs to the complex I 23 kDa subunit family.</text>
</comment>
<sequence>MGTVNVVRVASRHKLSWYEKFYFYSIGKGLWITLKHFIKAAILRKAVTIEFPEKKRKYSTRFRGMHTMKRDEQGRERCTSCFCCMWICPADAIYIEAAEVTPEIQHLHPEDKYAKKFEIDLLRCIFCGMCEEACPKGAIYLDGPGEMATDNREDLILTKERMMQLVGGPIIGERQ</sequence>
<proteinExistence type="inferred from homology"/>